<reference key="1">
    <citation type="journal article" date="2010" name="PLoS Genet.">
        <title>Genome sequence of the plant growth promoting endophytic bacterium Enterobacter sp. 638.</title>
        <authorList>
            <person name="Taghavi S."/>
            <person name="van der Lelie D."/>
            <person name="Hoffman A."/>
            <person name="Zhang Y.B."/>
            <person name="Walla M.D."/>
            <person name="Vangronsveld J."/>
            <person name="Newman L."/>
            <person name="Monchy S."/>
        </authorList>
    </citation>
    <scope>NUCLEOTIDE SEQUENCE [LARGE SCALE GENOMIC DNA]</scope>
    <source>
        <strain>638</strain>
    </source>
</reference>
<organism>
    <name type="scientific">Enterobacter sp. (strain 638)</name>
    <dbReference type="NCBI Taxonomy" id="399742"/>
    <lineage>
        <taxon>Bacteria</taxon>
        <taxon>Pseudomonadati</taxon>
        <taxon>Pseudomonadota</taxon>
        <taxon>Gammaproteobacteria</taxon>
        <taxon>Enterobacterales</taxon>
        <taxon>Enterobacteriaceae</taxon>
        <taxon>Enterobacter</taxon>
    </lineage>
</organism>
<evidence type="ECO:0000255" key="1">
    <source>
        <dbReference type="HAMAP-Rule" id="MF_00577"/>
    </source>
</evidence>
<name>HUTU_ENT38</name>
<comment type="function">
    <text evidence="1">Catalyzes the conversion of urocanate to 4-imidazolone-5-propionate.</text>
</comment>
<comment type="catalytic activity">
    <reaction evidence="1">
        <text>4-imidazolone-5-propanoate = trans-urocanate + H2O</text>
        <dbReference type="Rhea" id="RHEA:13101"/>
        <dbReference type="ChEBI" id="CHEBI:15377"/>
        <dbReference type="ChEBI" id="CHEBI:17771"/>
        <dbReference type="ChEBI" id="CHEBI:77893"/>
        <dbReference type="EC" id="4.2.1.49"/>
    </reaction>
</comment>
<comment type="cofactor">
    <cofactor evidence="1">
        <name>NAD(+)</name>
        <dbReference type="ChEBI" id="CHEBI:57540"/>
    </cofactor>
    <text evidence="1">Binds 1 NAD(+) per subunit.</text>
</comment>
<comment type="pathway">
    <text evidence="1">Amino-acid degradation; L-histidine degradation into L-glutamate; N-formimidoyl-L-glutamate from L-histidine: step 2/3.</text>
</comment>
<comment type="subcellular location">
    <subcellularLocation>
        <location evidence="1">Cytoplasm</location>
    </subcellularLocation>
</comment>
<comment type="similarity">
    <text evidence="1">Belongs to the urocanase family.</text>
</comment>
<feature type="chain" id="PRO_1000061177" description="Urocanate hydratase">
    <location>
        <begin position="1"/>
        <end position="561"/>
    </location>
</feature>
<feature type="active site" evidence="1">
    <location>
        <position position="410"/>
    </location>
</feature>
<feature type="binding site" evidence="1">
    <location>
        <begin position="52"/>
        <end position="53"/>
    </location>
    <ligand>
        <name>NAD(+)</name>
        <dbReference type="ChEBI" id="CHEBI:57540"/>
    </ligand>
</feature>
<feature type="binding site" evidence="1">
    <location>
        <position position="130"/>
    </location>
    <ligand>
        <name>NAD(+)</name>
        <dbReference type="ChEBI" id="CHEBI:57540"/>
    </ligand>
</feature>
<feature type="binding site" evidence="1">
    <location>
        <begin position="176"/>
        <end position="178"/>
    </location>
    <ligand>
        <name>NAD(+)</name>
        <dbReference type="ChEBI" id="CHEBI:57540"/>
    </ligand>
</feature>
<feature type="binding site" evidence="1">
    <location>
        <position position="196"/>
    </location>
    <ligand>
        <name>NAD(+)</name>
        <dbReference type="ChEBI" id="CHEBI:57540"/>
    </ligand>
</feature>
<feature type="binding site" evidence="1">
    <location>
        <position position="201"/>
    </location>
    <ligand>
        <name>NAD(+)</name>
        <dbReference type="ChEBI" id="CHEBI:57540"/>
    </ligand>
</feature>
<feature type="binding site" evidence="1">
    <location>
        <begin position="242"/>
        <end position="243"/>
    </location>
    <ligand>
        <name>NAD(+)</name>
        <dbReference type="ChEBI" id="CHEBI:57540"/>
    </ligand>
</feature>
<feature type="binding site" evidence="1">
    <location>
        <begin position="263"/>
        <end position="267"/>
    </location>
    <ligand>
        <name>NAD(+)</name>
        <dbReference type="ChEBI" id="CHEBI:57540"/>
    </ligand>
</feature>
<feature type="binding site" evidence="1">
    <location>
        <begin position="273"/>
        <end position="274"/>
    </location>
    <ligand>
        <name>NAD(+)</name>
        <dbReference type="ChEBI" id="CHEBI:57540"/>
    </ligand>
</feature>
<feature type="binding site" evidence="1">
    <location>
        <position position="322"/>
    </location>
    <ligand>
        <name>NAD(+)</name>
        <dbReference type="ChEBI" id="CHEBI:57540"/>
    </ligand>
</feature>
<feature type="binding site" evidence="1">
    <location>
        <position position="492"/>
    </location>
    <ligand>
        <name>NAD(+)</name>
        <dbReference type="ChEBI" id="CHEBI:57540"/>
    </ligand>
</feature>
<accession>A4W8B4</accession>
<proteinExistence type="inferred from homology"/>
<gene>
    <name evidence="1" type="primary">hutU</name>
    <name type="ordered locus">Ent638_1263</name>
</gene>
<keyword id="KW-0963">Cytoplasm</keyword>
<keyword id="KW-0369">Histidine metabolism</keyword>
<keyword id="KW-0456">Lyase</keyword>
<keyword id="KW-0520">NAD</keyword>
<sequence>MSSGKYRQQEIRAPRGTTLTAKSWLTEAPLRMLMNNLDPEVAENPNELVVYGGIGRAARNWECYDAIVDSLTHLESDETLLVQSGKPVGVFKTHENAPRVLIANSNLVPHWATWEHFNELDAKGLAMYGQMTAGSWIYIGSQGIVQGTYETFVEAGRQHYNGSLKGRWVLTAGLGGMGGAQPLAATLAGACSLNIECQQSRIDFRLRTRYVDEQADNLDDALARINKYTSQGKTVSIALCGNAADIVPELVARGVRPDLVTDQTSAHDPLHGYLPTGWSWEEYQQKAKTDPEGTVLAAKKSMAEHVRAMLAFSDMGVPTFDYGNNIRQMAKEIGVENAFDFPGFVPAYIRPLFCRGIGPFRWVALSGDPQDIYKTDAKVKEIVADDAHLHHWLDMARERINFQGLPARICWVGLEWRQKLGLAFNEMVRSGEVSAPIVIGRDHLDSGSVASPNRETEAMQDGSDAVSDWPLLNALLNTASGATWVSLHHGGGVGMGFSQHAGMVIVCDGTDEAAARIARVLHNDPATGVMRHADAGYDIAIDCAKEQGLNLPMIAATQGKH</sequence>
<dbReference type="EC" id="4.2.1.49" evidence="1"/>
<dbReference type="EMBL" id="CP000653">
    <property type="protein sequence ID" value="ABP59944.1"/>
    <property type="molecule type" value="Genomic_DNA"/>
</dbReference>
<dbReference type="RefSeq" id="WP_012016663.1">
    <property type="nucleotide sequence ID" value="NC_009436.1"/>
</dbReference>
<dbReference type="SMR" id="A4W8B4"/>
<dbReference type="STRING" id="399742.Ent638_1263"/>
<dbReference type="KEGG" id="ent:Ent638_1263"/>
<dbReference type="eggNOG" id="COG2987">
    <property type="taxonomic scope" value="Bacteria"/>
</dbReference>
<dbReference type="HOGENOM" id="CLU_018868_0_1_6"/>
<dbReference type="OrthoDB" id="9764874at2"/>
<dbReference type="UniPathway" id="UPA00379">
    <property type="reaction ID" value="UER00550"/>
</dbReference>
<dbReference type="Proteomes" id="UP000000230">
    <property type="component" value="Chromosome"/>
</dbReference>
<dbReference type="GO" id="GO:0005737">
    <property type="term" value="C:cytoplasm"/>
    <property type="evidence" value="ECO:0007669"/>
    <property type="project" value="UniProtKB-SubCell"/>
</dbReference>
<dbReference type="GO" id="GO:0016153">
    <property type="term" value="F:urocanate hydratase activity"/>
    <property type="evidence" value="ECO:0007669"/>
    <property type="project" value="UniProtKB-UniRule"/>
</dbReference>
<dbReference type="GO" id="GO:0019556">
    <property type="term" value="P:L-histidine catabolic process to glutamate and formamide"/>
    <property type="evidence" value="ECO:0007669"/>
    <property type="project" value="UniProtKB-UniPathway"/>
</dbReference>
<dbReference type="GO" id="GO:0019557">
    <property type="term" value="P:L-histidine catabolic process to glutamate and formate"/>
    <property type="evidence" value="ECO:0007669"/>
    <property type="project" value="UniProtKB-UniPathway"/>
</dbReference>
<dbReference type="FunFam" id="3.40.50.10730:FF:000001">
    <property type="entry name" value="Urocanate hydratase"/>
    <property type="match status" value="1"/>
</dbReference>
<dbReference type="Gene3D" id="3.40.50.10730">
    <property type="entry name" value="Urocanase like domains"/>
    <property type="match status" value="1"/>
</dbReference>
<dbReference type="Gene3D" id="3.40.1770.10">
    <property type="entry name" value="Urocanase superfamily"/>
    <property type="match status" value="1"/>
</dbReference>
<dbReference type="HAMAP" id="MF_00577">
    <property type="entry name" value="HutU"/>
    <property type="match status" value="1"/>
</dbReference>
<dbReference type="InterPro" id="IPR055351">
    <property type="entry name" value="Urocanase"/>
</dbReference>
<dbReference type="InterPro" id="IPR023637">
    <property type="entry name" value="Urocanase-like"/>
</dbReference>
<dbReference type="InterPro" id="IPR035401">
    <property type="entry name" value="Urocanase_C"/>
</dbReference>
<dbReference type="InterPro" id="IPR038364">
    <property type="entry name" value="Urocanase_central_sf"/>
</dbReference>
<dbReference type="InterPro" id="IPR023636">
    <property type="entry name" value="Urocanase_CS"/>
</dbReference>
<dbReference type="InterPro" id="IPR035400">
    <property type="entry name" value="Urocanase_N"/>
</dbReference>
<dbReference type="InterPro" id="IPR035085">
    <property type="entry name" value="Urocanase_Rossmann-like"/>
</dbReference>
<dbReference type="InterPro" id="IPR036190">
    <property type="entry name" value="Urocanase_sf"/>
</dbReference>
<dbReference type="NCBIfam" id="TIGR01228">
    <property type="entry name" value="hutU"/>
    <property type="match status" value="1"/>
</dbReference>
<dbReference type="NCBIfam" id="NF003820">
    <property type="entry name" value="PRK05414.1"/>
    <property type="match status" value="1"/>
</dbReference>
<dbReference type="PANTHER" id="PTHR12216">
    <property type="entry name" value="UROCANATE HYDRATASE"/>
    <property type="match status" value="1"/>
</dbReference>
<dbReference type="PANTHER" id="PTHR12216:SF4">
    <property type="entry name" value="UROCANATE HYDRATASE"/>
    <property type="match status" value="1"/>
</dbReference>
<dbReference type="Pfam" id="PF01175">
    <property type="entry name" value="Urocanase"/>
    <property type="match status" value="1"/>
</dbReference>
<dbReference type="Pfam" id="PF17392">
    <property type="entry name" value="Urocanase_C"/>
    <property type="match status" value="1"/>
</dbReference>
<dbReference type="Pfam" id="PF17391">
    <property type="entry name" value="Urocanase_N"/>
    <property type="match status" value="1"/>
</dbReference>
<dbReference type="PIRSF" id="PIRSF001423">
    <property type="entry name" value="Urocanate_hydrat"/>
    <property type="match status" value="1"/>
</dbReference>
<dbReference type="SUPFAM" id="SSF111326">
    <property type="entry name" value="Urocanase"/>
    <property type="match status" value="1"/>
</dbReference>
<dbReference type="PROSITE" id="PS01233">
    <property type="entry name" value="UROCANASE"/>
    <property type="match status" value="1"/>
</dbReference>
<protein>
    <recommendedName>
        <fullName evidence="1">Urocanate hydratase</fullName>
        <shortName evidence="1">Urocanase</shortName>
        <ecNumber evidence="1">4.2.1.49</ecNumber>
    </recommendedName>
    <alternativeName>
        <fullName evidence="1">Imidazolonepropionate hydrolase</fullName>
    </alternativeName>
</protein>